<evidence type="ECO:0000255" key="1">
    <source>
        <dbReference type="HAMAP-Rule" id="MF_00536"/>
    </source>
</evidence>
<evidence type="ECO:0000269" key="2">
    <source ref="2"/>
</evidence>
<evidence type="ECO:0000305" key="3">
    <source ref="2"/>
</evidence>
<evidence type="ECO:0007829" key="4">
    <source>
        <dbReference type="PDB" id="1R8K"/>
    </source>
</evidence>
<reference key="1">
    <citation type="journal article" date="2001" name="Nature">
        <title>Complete genome sequence of Salmonella enterica serovar Typhimurium LT2.</title>
        <authorList>
            <person name="McClelland M."/>
            <person name="Sanderson K.E."/>
            <person name="Spieth J."/>
            <person name="Clifton S.W."/>
            <person name="Latreille P."/>
            <person name="Courtney L."/>
            <person name="Porwollik S."/>
            <person name="Ali J."/>
            <person name="Dante M."/>
            <person name="Du F."/>
            <person name="Hou S."/>
            <person name="Layman D."/>
            <person name="Leonard S."/>
            <person name="Nguyen C."/>
            <person name="Scott K."/>
            <person name="Holmes A."/>
            <person name="Grewal N."/>
            <person name="Mulvaney E."/>
            <person name="Ryan E."/>
            <person name="Sun H."/>
            <person name="Florea L."/>
            <person name="Miller W."/>
            <person name="Stoneking T."/>
            <person name="Nhan M."/>
            <person name="Waterston R."/>
            <person name="Wilson R.K."/>
        </authorList>
    </citation>
    <scope>NUCLEOTIDE SEQUENCE [LARGE SCALE GENOMIC DNA]</scope>
    <source>
        <strain>LT2 / SGSC1412 / ATCC 700720</strain>
    </source>
</reference>
<reference key="2">
    <citation type="submission" date="2005-01" db="PDB data bank">
        <title>Crystal structure of NAD-dependent dehydrogenase/carboxylase of Salmonella typhimurium.</title>
        <authorList>
            <consortium name="Midwest center for structural genomics (MCSG)"/>
        </authorList>
    </citation>
    <scope>X-RAY CRYSTALLOGRAPHY (2.1 ANGSTROMS) IN COMPLEX WITH COBALT IONS</scope>
    <scope>COFACTOR</scope>
    <scope>SUBUNIT</scope>
</reference>
<protein>
    <recommendedName>
        <fullName evidence="1">4-hydroxythreonine-4-phosphate dehydrogenase</fullName>
        <ecNumber evidence="1">1.1.1.262</ecNumber>
    </recommendedName>
    <alternativeName>
        <fullName evidence="1">4-(phosphohydroxy)-L-threonine dehydrogenase</fullName>
    </alternativeName>
</protein>
<comment type="function">
    <text evidence="1">Catalyzes the NAD(P)-dependent oxidation of 4-(phosphooxy)-L-threonine (HTP) into 2-amino-3-oxo-4-(phosphooxy)butyric acid which spontaneously decarboxylates to form 3-amino-2-oxopropyl phosphate (AHAP).</text>
</comment>
<comment type="catalytic activity">
    <reaction evidence="1">
        <text>4-(phosphooxy)-L-threonine + NAD(+) = 3-amino-2-oxopropyl phosphate + CO2 + NADH</text>
        <dbReference type="Rhea" id="RHEA:32275"/>
        <dbReference type="ChEBI" id="CHEBI:16526"/>
        <dbReference type="ChEBI" id="CHEBI:57279"/>
        <dbReference type="ChEBI" id="CHEBI:57540"/>
        <dbReference type="ChEBI" id="CHEBI:57945"/>
        <dbReference type="ChEBI" id="CHEBI:58452"/>
        <dbReference type="EC" id="1.1.1.262"/>
    </reaction>
</comment>
<comment type="cofactor">
    <cofactor evidence="1 2">
        <name>Zn(2+)</name>
        <dbReference type="ChEBI" id="CHEBI:29105"/>
    </cofactor>
    <cofactor evidence="1 2">
        <name>Mg(2+)</name>
        <dbReference type="ChEBI" id="CHEBI:18420"/>
    </cofactor>
    <cofactor evidence="1 2">
        <name>Co(2+)</name>
        <dbReference type="ChEBI" id="CHEBI:48828"/>
    </cofactor>
    <text evidence="1 2">Binds 1 divalent metal cation per subunit. Can probably use ions such as Zn(2+), Mg(2+) or Co(2+).</text>
</comment>
<comment type="pathway">
    <text evidence="1">Cofactor biosynthesis; pyridoxine 5'-phosphate biosynthesis; pyridoxine 5'-phosphate from D-erythrose 4-phosphate: step 4/5.</text>
</comment>
<comment type="subunit">
    <text evidence="1 2">Homodimer.</text>
</comment>
<comment type="subcellular location">
    <subcellularLocation>
        <location evidence="1">Cytoplasm</location>
    </subcellularLocation>
</comment>
<comment type="miscellaneous">
    <text evidence="1">The active site is located at the dimer interface.</text>
</comment>
<comment type="similarity">
    <text evidence="1">Belongs to the PdxA family.</text>
</comment>
<dbReference type="EC" id="1.1.1.262" evidence="1"/>
<dbReference type="EMBL" id="AE006468">
    <property type="protein sequence ID" value="AAL19055.1"/>
    <property type="molecule type" value="Genomic_DNA"/>
</dbReference>
<dbReference type="RefSeq" id="NP_459096.1">
    <property type="nucleotide sequence ID" value="NC_003197.2"/>
</dbReference>
<dbReference type="RefSeq" id="WP_000093016.1">
    <property type="nucleotide sequence ID" value="NC_003197.2"/>
</dbReference>
<dbReference type="PDB" id="1R8K">
    <property type="method" value="X-ray"/>
    <property type="resolution" value="2.10 A"/>
    <property type="chains" value="A/B=1-329"/>
</dbReference>
<dbReference type="PDBsum" id="1R8K"/>
<dbReference type="SMR" id="P58717"/>
<dbReference type="STRING" id="99287.STM0091"/>
<dbReference type="PaxDb" id="99287-STM0091"/>
<dbReference type="DNASU" id="1251609"/>
<dbReference type="GeneID" id="1251609"/>
<dbReference type="KEGG" id="stm:STM0091"/>
<dbReference type="PATRIC" id="fig|99287.12.peg.94"/>
<dbReference type="HOGENOM" id="CLU_040168_1_0_6"/>
<dbReference type="PhylomeDB" id="P58717"/>
<dbReference type="BioCyc" id="SENT99287:STM0091-MONOMER"/>
<dbReference type="UniPathway" id="UPA00244">
    <property type="reaction ID" value="UER00312"/>
</dbReference>
<dbReference type="EvolutionaryTrace" id="P58717"/>
<dbReference type="Proteomes" id="UP000001014">
    <property type="component" value="Chromosome"/>
</dbReference>
<dbReference type="GO" id="GO:0005737">
    <property type="term" value="C:cytoplasm"/>
    <property type="evidence" value="ECO:0007669"/>
    <property type="project" value="UniProtKB-SubCell"/>
</dbReference>
<dbReference type="GO" id="GO:0050570">
    <property type="term" value="F:4-hydroxythreonine-4-phosphate dehydrogenase activity"/>
    <property type="evidence" value="ECO:0000318"/>
    <property type="project" value="GO_Central"/>
</dbReference>
<dbReference type="GO" id="GO:0050897">
    <property type="term" value="F:cobalt ion binding"/>
    <property type="evidence" value="ECO:0007669"/>
    <property type="project" value="UniProtKB-UniRule"/>
</dbReference>
<dbReference type="GO" id="GO:0000287">
    <property type="term" value="F:magnesium ion binding"/>
    <property type="evidence" value="ECO:0007669"/>
    <property type="project" value="UniProtKB-UniRule"/>
</dbReference>
<dbReference type="GO" id="GO:0051287">
    <property type="term" value="F:NAD binding"/>
    <property type="evidence" value="ECO:0007669"/>
    <property type="project" value="InterPro"/>
</dbReference>
<dbReference type="GO" id="GO:0008270">
    <property type="term" value="F:zinc ion binding"/>
    <property type="evidence" value="ECO:0007669"/>
    <property type="project" value="UniProtKB-UniRule"/>
</dbReference>
<dbReference type="GO" id="GO:0042823">
    <property type="term" value="P:pyridoxal phosphate biosynthetic process"/>
    <property type="evidence" value="ECO:0000318"/>
    <property type="project" value="GO_Central"/>
</dbReference>
<dbReference type="GO" id="GO:0008615">
    <property type="term" value="P:pyridoxine biosynthetic process"/>
    <property type="evidence" value="ECO:0000318"/>
    <property type="project" value="GO_Central"/>
</dbReference>
<dbReference type="FunFam" id="3.40.718.10:FF:000010">
    <property type="entry name" value="4-hydroxythreonine-4-phosphate dehydrogenase"/>
    <property type="match status" value="1"/>
</dbReference>
<dbReference type="Gene3D" id="3.40.718.10">
    <property type="entry name" value="Isopropylmalate Dehydrogenase"/>
    <property type="match status" value="1"/>
</dbReference>
<dbReference type="HAMAP" id="MF_00536">
    <property type="entry name" value="PdxA"/>
    <property type="match status" value="1"/>
</dbReference>
<dbReference type="InterPro" id="IPR037510">
    <property type="entry name" value="PdxA"/>
</dbReference>
<dbReference type="InterPro" id="IPR005255">
    <property type="entry name" value="PdxA_fam"/>
</dbReference>
<dbReference type="NCBIfam" id="TIGR00557">
    <property type="entry name" value="pdxA"/>
    <property type="match status" value="1"/>
</dbReference>
<dbReference type="PANTHER" id="PTHR30004">
    <property type="entry name" value="4-HYDROXYTHREONINE-4-PHOSPHATE DEHYDROGENASE"/>
    <property type="match status" value="1"/>
</dbReference>
<dbReference type="PANTHER" id="PTHR30004:SF5">
    <property type="entry name" value="4-HYDROXYTHREONINE-4-PHOSPHATE DEHYDROGENASE"/>
    <property type="match status" value="1"/>
</dbReference>
<dbReference type="Pfam" id="PF04166">
    <property type="entry name" value="PdxA"/>
    <property type="match status" value="1"/>
</dbReference>
<dbReference type="SUPFAM" id="SSF53659">
    <property type="entry name" value="Isocitrate/Isopropylmalate dehydrogenase-like"/>
    <property type="match status" value="1"/>
</dbReference>
<sequence length="329" mass="34779">MSSAQRVVITPGEPAGSGPDLVVQLAQRAWPIELVVCADGALLTERAAMLGLPLSLLPYSPDVPAAPQPAGTLTLLPVSLRAPAISGQLTVENGPYVVETLARACDGCLNGEFAALITGPVHKGVINDAGISFTGHTEFFEERSQAKKVVMMLATEELRVALATTHLPLRAIADAITPALLHEVIAILHHDLRTKFGIAEPRILVCGLNPHAGEGGHMGTEEIDTIIPVLDELRAQGMKLNGPLPADTLFQPKYLDNADAVLAMYHDQGLPVLKYQGFGRGVNITLGLPFIRTSVDHGTALELAGRGKADVGSFITALNLAIKMIVNTQ</sequence>
<organism>
    <name type="scientific">Salmonella typhimurium (strain LT2 / SGSC1412 / ATCC 700720)</name>
    <dbReference type="NCBI Taxonomy" id="99287"/>
    <lineage>
        <taxon>Bacteria</taxon>
        <taxon>Pseudomonadati</taxon>
        <taxon>Pseudomonadota</taxon>
        <taxon>Gammaproteobacteria</taxon>
        <taxon>Enterobacterales</taxon>
        <taxon>Enterobacteriaceae</taxon>
        <taxon>Salmonella</taxon>
    </lineage>
</organism>
<name>PDXA_SALTY</name>
<gene>
    <name evidence="1" type="primary">pdxA</name>
    <name type="ordered locus">STM0091</name>
</gene>
<keyword id="KW-0002">3D-structure</keyword>
<keyword id="KW-0170">Cobalt</keyword>
<keyword id="KW-0963">Cytoplasm</keyword>
<keyword id="KW-0460">Magnesium</keyword>
<keyword id="KW-0479">Metal-binding</keyword>
<keyword id="KW-0520">NAD</keyword>
<keyword id="KW-0521">NADP</keyword>
<keyword id="KW-0560">Oxidoreductase</keyword>
<keyword id="KW-0664">Pyridoxine biosynthesis</keyword>
<keyword id="KW-1185">Reference proteome</keyword>
<keyword id="KW-0862">Zinc</keyword>
<accession>P58717</accession>
<proteinExistence type="evidence at protein level"/>
<feature type="chain" id="PRO_0000188826" description="4-hydroxythreonine-4-phosphate dehydrogenase">
    <location>
        <begin position="1"/>
        <end position="329"/>
    </location>
</feature>
<feature type="binding site" evidence="1">
    <location>
        <position position="136"/>
    </location>
    <ligand>
        <name>substrate</name>
    </ligand>
</feature>
<feature type="binding site" evidence="1">
    <location>
        <position position="137"/>
    </location>
    <ligand>
        <name>substrate</name>
    </ligand>
</feature>
<feature type="binding site" evidence="1 3">
    <location>
        <position position="166"/>
    </location>
    <ligand>
        <name>a divalent metal cation</name>
        <dbReference type="ChEBI" id="CHEBI:60240"/>
        <note>ligand shared between dimeric partners</note>
    </ligand>
</feature>
<feature type="binding site" evidence="1 3">
    <location>
        <position position="211"/>
    </location>
    <ligand>
        <name>a divalent metal cation</name>
        <dbReference type="ChEBI" id="CHEBI:60240"/>
        <note>ligand shared between dimeric partners</note>
    </ligand>
</feature>
<feature type="binding site" evidence="1 3">
    <location>
        <position position="266"/>
    </location>
    <ligand>
        <name>a divalent metal cation</name>
        <dbReference type="ChEBI" id="CHEBI:60240"/>
        <note>ligand shared between dimeric partners</note>
    </ligand>
</feature>
<feature type="binding site" evidence="1">
    <location>
        <position position="274"/>
    </location>
    <ligand>
        <name>substrate</name>
    </ligand>
</feature>
<feature type="binding site" evidence="1">
    <location>
        <position position="283"/>
    </location>
    <ligand>
        <name>substrate</name>
    </ligand>
</feature>
<feature type="binding site" evidence="1">
    <location>
        <position position="292"/>
    </location>
    <ligand>
        <name>substrate</name>
    </ligand>
</feature>
<feature type="strand" evidence="4">
    <location>
        <begin position="6"/>
        <end position="10"/>
    </location>
</feature>
<feature type="helix" evidence="4">
    <location>
        <begin position="18"/>
        <end position="25"/>
    </location>
</feature>
<feature type="strand" evidence="4">
    <location>
        <begin position="31"/>
        <end position="38"/>
    </location>
</feature>
<feature type="helix" evidence="4">
    <location>
        <begin position="40"/>
        <end position="49"/>
    </location>
</feature>
<feature type="strand" evidence="4">
    <location>
        <begin position="55"/>
        <end position="58"/>
    </location>
</feature>
<feature type="strand" evidence="4">
    <location>
        <begin position="72"/>
        <end position="77"/>
    </location>
</feature>
<feature type="helix" evidence="4">
    <location>
        <begin position="91"/>
        <end position="93"/>
    </location>
</feature>
<feature type="helix" evidence="4">
    <location>
        <begin position="94"/>
        <end position="109"/>
    </location>
</feature>
<feature type="strand" evidence="4">
    <location>
        <begin position="114"/>
        <end position="118"/>
    </location>
</feature>
<feature type="helix" evidence="4">
    <location>
        <begin position="123"/>
        <end position="127"/>
    </location>
</feature>
<feature type="turn" evidence="4">
    <location>
        <begin position="128"/>
        <end position="130"/>
    </location>
</feature>
<feature type="helix" evidence="4">
    <location>
        <begin position="136"/>
        <end position="143"/>
    </location>
</feature>
<feature type="strand" evidence="4">
    <location>
        <begin position="150"/>
        <end position="154"/>
    </location>
</feature>
<feature type="strand" evidence="4">
    <location>
        <begin position="159"/>
        <end position="164"/>
    </location>
</feature>
<feature type="helix" evidence="4">
    <location>
        <begin position="169"/>
        <end position="171"/>
    </location>
</feature>
<feature type="helix" evidence="4">
    <location>
        <begin position="172"/>
        <end position="175"/>
    </location>
</feature>
<feature type="helix" evidence="4">
    <location>
        <begin position="178"/>
        <end position="194"/>
    </location>
</feature>
<feature type="strand" evidence="4">
    <location>
        <begin position="202"/>
        <end position="206"/>
    </location>
</feature>
<feature type="helix" evidence="4">
    <location>
        <begin position="210"/>
        <end position="216"/>
    </location>
</feature>
<feature type="helix" evidence="4">
    <location>
        <begin position="221"/>
        <end position="224"/>
    </location>
</feature>
<feature type="helix" evidence="4">
    <location>
        <begin position="226"/>
        <end position="234"/>
    </location>
</feature>
<feature type="turn" evidence="4">
    <location>
        <begin position="235"/>
        <end position="237"/>
    </location>
</feature>
<feature type="strand" evidence="4">
    <location>
        <begin position="239"/>
        <end position="244"/>
    </location>
</feature>
<feature type="helix" evidence="4">
    <location>
        <begin position="246"/>
        <end position="249"/>
    </location>
</feature>
<feature type="helix" evidence="4">
    <location>
        <begin position="252"/>
        <end position="255"/>
    </location>
</feature>
<feature type="strand" evidence="4">
    <location>
        <begin position="259"/>
        <end position="265"/>
    </location>
</feature>
<feature type="helix" evidence="4">
    <location>
        <begin position="266"/>
        <end position="277"/>
    </location>
</feature>
<feature type="strand" evidence="4">
    <location>
        <begin position="282"/>
        <end position="290"/>
    </location>
</feature>
<feature type="strand" evidence="4">
    <location>
        <begin position="292"/>
        <end position="294"/>
    </location>
</feature>
<feature type="turn" evidence="4">
    <location>
        <begin position="301"/>
        <end position="306"/>
    </location>
</feature>
<feature type="helix" evidence="4">
    <location>
        <begin position="312"/>
        <end position="327"/>
    </location>
</feature>